<feature type="chain" id="PRO_0000253984" description="Guanine nucleotide-binding protein G(s) subunit alpha isoforms XLas">
    <location>
        <begin position="1"/>
        <end position="1037"/>
    </location>
</feature>
<feature type="domain" description="G-alpha" evidence="7">
    <location>
        <begin position="682"/>
        <end position="1037"/>
    </location>
</feature>
<feature type="region of interest" description="Disordered" evidence="8">
    <location>
        <begin position="1"/>
        <end position="105"/>
    </location>
</feature>
<feature type="region of interest" description="Disordered" evidence="8">
    <location>
        <begin position="185"/>
        <end position="224"/>
    </location>
</feature>
<feature type="region of interest" description="Disordered" evidence="8">
    <location>
        <begin position="283"/>
        <end position="588"/>
    </location>
</feature>
<feature type="region of interest" description="Disordered" evidence="8">
    <location>
        <begin position="640"/>
        <end position="666"/>
    </location>
</feature>
<feature type="region of interest" description="G1 motif" evidence="7">
    <location>
        <begin position="685"/>
        <end position="698"/>
    </location>
</feature>
<feature type="region of interest" description="Disordered" evidence="8">
    <location>
        <begin position="711"/>
        <end position="734"/>
    </location>
</feature>
<feature type="region of interest" description="G2 motif" evidence="7">
    <location>
        <begin position="839"/>
        <end position="847"/>
    </location>
</feature>
<feature type="region of interest" description="G3 motif" evidence="7">
    <location>
        <begin position="862"/>
        <end position="871"/>
    </location>
</feature>
<feature type="region of interest" description="G4 motif" evidence="7">
    <location>
        <begin position="931"/>
        <end position="938"/>
    </location>
</feature>
<feature type="region of interest" description="G5 motif" evidence="7">
    <location>
        <begin position="1007"/>
        <end position="1012"/>
    </location>
</feature>
<feature type="coiled-coil region" evidence="6">
    <location>
        <begin position="641"/>
        <end position="667"/>
    </location>
</feature>
<feature type="coiled-coil region" evidence="6">
    <location>
        <begin position="730"/>
        <end position="756"/>
    </location>
</feature>
<feature type="compositionally biased region" description="Low complexity" evidence="8">
    <location>
        <begin position="33"/>
        <end position="46"/>
    </location>
</feature>
<feature type="compositionally biased region" description="Basic and acidic residues" evidence="8">
    <location>
        <begin position="343"/>
        <end position="354"/>
    </location>
</feature>
<feature type="compositionally biased region" description="Low complexity" evidence="8">
    <location>
        <begin position="361"/>
        <end position="408"/>
    </location>
</feature>
<feature type="compositionally biased region" description="Low complexity" evidence="8">
    <location>
        <begin position="416"/>
        <end position="521"/>
    </location>
</feature>
<feature type="compositionally biased region" description="Basic and acidic residues" evidence="8">
    <location>
        <begin position="553"/>
        <end position="565"/>
    </location>
</feature>
<feature type="compositionally biased region" description="Acidic residues" evidence="8">
    <location>
        <begin position="572"/>
        <end position="583"/>
    </location>
</feature>
<feature type="compositionally biased region" description="Basic and acidic residues" evidence="8">
    <location>
        <begin position="640"/>
        <end position="660"/>
    </location>
</feature>
<feature type="binding site" evidence="2">
    <location>
        <begin position="690"/>
        <end position="698"/>
    </location>
    <ligand>
        <name>GTP</name>
        <dbReference type="ChEBI" id="CHEBI:37565"/>
    </ligand>
</feature>
<feature type="binding site" evidence="2">
    <location>
        <position position="697"/>
    </location>
    <ligand>
        <name>Mg(2+)</name>
        <dbReference type="ChEBI" id="CHEBI:18420"/>
    </ligand>
</feature>
<feature type="binding site" evidence="2">
    <location>
        <begin position="840"/>
        <end position="847"/>
    </location>
    <ligand>
        <name>GTP</name>
        <dbReference type="ChEBI" id="CHEBI:37565"/>
    </ligand>
</feature>
<feature type="binding site" evidence="2">
    <location>
        <position position="847"/>
    </location>
    <ligand>
        <name>Mg(2+)</name>
        <dbReference type="ChEBI" id="CHEBI:18420"/>
    </ligand>
</feature>
<feature type="binding site" evidence="3">
    <location>
        <begin position="866"/>
        <end position="870"/>
    </location>
    <ligand>
        <name>GTP</name>
        <dbReference type="ChEBI" id="CHEBI:37565"/>
    </ligand>
</feature>
<feature type="binding site" evidence="3">
    <location>
        <begin position="935"/>
        <end position="938"/>
    </location>
    <ligand>
        <name>GTP</name>
        <dbReference type="ChEBI" id="CHEBI:37565"/>
    </ligand>
</feature>
<feature type="binding site" evidence="2">
    <location>
        <position position="1009"/>
    </location>
    <ligand>
        <name>GTP</name>
        <dbReference type="ChEBI" id="CHEBI:37565"/>
    </ligand>
</feature>
<feature type="modified residue" description="ADP-ribosylarginine; by cholera toxin" evidence="1">
    <location>
        <position position="844"/>
    </location>
</feature>
<feature type="modified residue" description="Phosphoserine" evidence="26">
    <location>
        <position position="995"/>
    </location>
</feature>
<feature type="splice variant" id="VSP_052173" description="In isoform XLas-3." evidence="21">
    <original>AGESGKSTIVKQMRILHVNGFNGEGGEEDPQAARSNSDGEKATKVQDIKNNLKEAIETIVAA</original>
    <variation>RKVVPSDTEGRFRLDRPAPATVSWTGRGFSVSSLLIRSPNPPAFTVEKPDTQVLENLVKAPL</variation>
    <location>
        <begin position="691"/>
        <end position="752"/>
    </location>
</feature>
<feature type="splice variant" id="VSP_052174" description="In isoform XLas-2." evidence="22">
    <original>EGGEEDPQAARSNSDG</original>
    <variation>DS</variation>
    <location>
        <begin position="714"/>
        <end position="729"/>
    </location>
</feature>
<feature type="splice variant" id="VSP_052175" description="In isoform XLas-3." evidence="21">
    <location>
        <begin position="753"/>
        <end position="1037"/>
    </location>
</feature>
<feature type="sequence variant" id="VAR_028777" description="In GNASHYP; dbSNP:rs61749698." evidence="12 14">
    <original>A</original>
    <variation>D</variation>
    <location>
        <position position="436"/>
    </location>
</feature>
<feature type="sequence variant" id="VAR_028778" description="In GNAS hyperfunction." evidence="12 14">
    <original>A</original>
    <variation>APADPDSGAAPDA</variation>
    <location>
        <position position="437"/>
    </location>
</feature>
<feature type="sequence variant" id="VAR_028779" description="In GNASHYP; dbSNP:rs148033592." evidence="12 14">
    <original>P</original>
    <variation>R</variation>
    <location>
        <position position="459"/>
    </location>
</feature>
<feature type="sequence variant" id="VAR_059656" description="In dbSNP:rs8986.">
    <original>R</original>
    <variation>L</variation>
    <location>
        <position position="1023"/>
    </location>
</feature>
<feature type="sequence conflict" description="In Ref. 3; CAB83215." evidence="22" ref="3">
    <original>Q</original>
    <variation>E</variation>
    <location>
        <position position="15"/>
    </location>
</feature>
<feature type="sequence conflict" description="In Ref. 3; CAB83215." evidence="22" ref="3">
    <original>A</original>
    <variation>S</variation>
    <location>
        <position position="46"/>
    </location>
</feature>
<feature type="sequence conflict" description="In Ref. 3; CAB83215." evidence="22" ref="3">
    <original>E</original>
    <variation>A</variation>
    <location>
        <position position="132"/>
    </location>
</feature>
<feature type="helix" evidence="28">
    <location>
        <begin position="655"/>
        <end position="682"/>
    </location>
</feature>
<feature type="strand" evidence="29">
    <location>
        <begin position="683"/>
        <end position="689"/>
    </location>
</feature>
<feature type="strand" evidence="29">
    <location>
        <begin position="692"/>
        <end position="694"/>
    </location>
</feature>
<feature type="helix" evidence="29">
    <location>
        <begin position="696"/>
        <end position="703"/>
    </location>
</feature>
<feature type="strand" evidence="30">
    <location>
        <begin position="851"/>
        <end position="857"/>
    </location>
</feature>
<feature type="strand" evidence="30">
    <location>
        <begin position="860"/>
        <end position="866"/>
    </location>
</feature>
<feature type="helix" evidence="30">
    <location>
        <begin position="877"/>
        <end position="881"/>
    </location>
</feature>
<feature type="strand" evidence="30">
    <location>
        <begin position="885"/>
        <end position="892"/>
    </location>
</feature>
<feature type="helix" evidence="30">
    <location>
        <begin position="909"/>
        <end position="920"/>
    </location>
</feature>
<feature type="turn" evidence="27">
    <location>
        <begin position="924"/>
        <end position="927"/>
    </location>
</feature>
<feature type="strand" evidence="30">
    <location>
        <begin position="929"/>
        <end position="935"/>
    </location>
</feature>
<feature type="helix" evidence="30">
    <location>
        <begin position="937"/>
        <end position="945"/>
    </location>
</feature>
<feature type="helix" evidence="30">
    <location>
        <begin position="951"/>
        <end position="954"/>
    </location>
</feature>
<feature type="helix" evidence="30">
    <location>
        <begin position="956"/>
        <end position="958"/>
    </location>
</feature>
<feature type="helix" evidence="30">
    <location>
        <begin position="975"/>
        <end position="994"/>
    </location>
</feature>
<feature type="turn" evidence="30">
    <location>
        <begin position="997"/>
        <end position="999"/>
    </location>
</feature>
<feature type="strand" evidence="30">
    <location>
        <begin position="1002"/>
        <end position="1006"/>
    </location>
</feature>
<feature type="helix" evidence="30">
    <location>
        <begin position="1014"/>
        <end position="1033"/>
    </location>
</feature>
<dbReference type="EC" id="3.6.5.-" evidence="5"/>
<dbReference type="EMBL" id="AL109840">
    <property type="status" value="NOT_ANNOTATED_CDS"/>
    <property type="molecule type" value="Genomic_DNA"/>
</dbReference>
<dbReference type="EMBL" id="AL121917">
    <property type="status" value="NOT_ANNOTATED_CDS"/>
    <property type="molecule type" value="Genomic_DNA"/>
</dbReference>
<dbReference type="EMBL" id="AL132655">
    <property type="status" value="NOT_ANNOTATED_CDS"/>
    <property type="molecule type" value="Genomic_DNA"/>
</dbReference>
<dbReference type="EMBL" id="CH471077">
    <property type="protein sequence ID" value="EAW75462.1"/>
    <property type="molecule type" value="Genomic_DNA"/>
</dbReference>
<dbReference type="EMBL" id="CH471077">
    <property type="protein sequence ID" value="EAW75469.1"/>
    <property type="molecule type" value="Genomic_DNA"/>
</dbReference>
<dbReference type="EMBL" id="AJ251760">
    <property type="protein sequence ID" value="CAB83215.1"/>
    <property type="status" value="ALT_FRAME"/>
    <property type="molecule type" value="Genomic_DNA"/>
</dbReference>
<dbReference type="EMBL" id="AJ224867">
    <property type="protein sequence ID" value="CAA12164.1"/>
    <property type="molecule type" value="mRNA"/>
</dbReference>
<dbReference type="EMBL" id="AJ224868">
    <property type="protein sequence ID" value="CAA12165.1"/>
    <property type="molecule type" value="Genomic_DNA"/>
</dbReference>
<dbReference type="EMBL" id="AY898804">
    <property type="protein sequence ID" value="AAX51890.1"/>
    <property type="molecule type" value="Genomic_DNA"/>
</dbReference>
<dbReference type="CCDS" id="CCDS46622.1">
    <molecule id="Q5JWF2-1"/>
</dbReference>
<dbReference type="RefSeq" id="NP_001296812.1">
    <property type="nucleotide sequence ID" value="NM_001309883.1"/>
</dbReference>
<dbReference type="RefSeq" id="NP_536350.2">
    <molecule id="Q5JWF2-1"/>
    <property type="nucleotide sequence ID" value="NM_080425.4"/>
</dbReference>
<dbReference type="RefSeq" id="XP_016883302.1">
    <molecule id="Q5JWF2-2"/>
    <property type="nucleotide sequence ID" value="XM_017027813.3"/>
</dbReference>
<dbReference type="RefSeq" id="XP_054179341.1">
    <molecule id="Q5JWF2-2"/>
    <property type="nucleotide sequence ID" value="XM_054323366.1"/>
</dbReference>
<dbReference type="PDB" id="8I2G">
    <property type="method" value="EM"/>
    <property type="resolution" value="2.80 A"/>
    <property type="chains" value="A=848-1037"/>
</dbReference>
<dbReference type="PDB" id="8JHB">
    <property type="method" value="EM"/>
    <property type="resolution" value="3.30 A"/>
    <property type="chains" value="A=655-707, A=847-896, A=907-1037"/>
</dbReference>
<dbReference type="PDB" id="8JHI">
    <property type="method" value="EM"/>
    <property type="resolution" value="3.20 A"/>
    <property type="chains" value="A=655-707, A=847-1037"/>
</dbReference>
<dbReference type="PDB" id="8WW2">
    <property type="method" value="EM"/>
    <property type="resolution" value="2.79 A"/>
    <property type="chains" value="A=683-1037"/>
</dbReference>
<dbReference type="PDB" id="9BKK">
    <property type="method" value="EM"/>
    <property type="resolution" value="2.51 A"/>
    <property type="chains" value="A=847-1037"/>
</dbReference>
<dbReference type="PDB" id="9J1P">
    <property type="method" value="EM"/>
    <property type="resolution" value="2.99 A"/>
    <property type="chains" value="A=848-894, A=909-1037"/>
</dbReference>
<dbReference type="PDBsum" id="8I2G"/>
<dbReference type="PDBsum" id="8JHB"/>
<dbReference type="PDBsum" id="8JHI"/>
<dbReference type="PDBsum" id="8WW2"/>
<dbReference type="PDBsum" id="9BKK"/>
<dbReference type="PDBsum" id="9J1P"/>
<dbReference type="EMDB" id="EMD-22283"/>
<dbReference type="EMDB" id="EMD-29684"/>
<dbReference type="EMDB" id="EMD-34371"/>
<dbReference type="EMDB" id="EMD-35135"/>
<dbReference type="EMDB" id="EMD-36261"/>
<dbReference type="EMDB" id="EMD-36266"/>
<dbReference type="EMDB" id="EMD-37881"/>
<dbReference type="EMDB" id="EMD-44643"/>
<dbReference type="EMDB" id="EMD-47114"/>
<dbReference type="EMDB" id="EMD-60096"/>
<dbReference type="EMDB" id="EMD-61077"/>
<dbReference type="SMR" id="Q5JWF2"/>
<dbReference type="BioGRID" id="109040">
    <property type="interactions" value="260"/>
</dbReference>
<dbReference type="CORUM" id="Q5JWF2"/>
<dbReference type="FunCoup" id="Q5JWF2">
    <property type="interactions" value="1572"/>
</dbReference>
<dbReference type="IntAct" id="Q5JWF2">
    <property type="interactions" value="32"/>
</dbReference>
<dbReference type="MINT" id="Q5JWF2"/>
<dbReference type="STRING" id="9606.ENSP00000360141"/>
<dbReference type="BindingDB" id="Q5JWF2"/>
<dbReference type="ChEMBL" id="CHEMBL4295849"/>
<dbReference type="GlyGen" id="Q5JWF2">
    <property type="glycosylation" value="3 sites, 1 O-linked glycan (1 site)"/>
</dbReference>
<dbReference type="iPTMnet" id="Q5JWF2"/>
<dbReference type="SwissPalm" id="Q5JWF2"/>
<dbReference type="BioMuta" id="GNAS"/>
<dbReference type="DMDM" id="116248089"/>
<dbReference type="jPOST" id="Q5JWF2"/>
<dbReference type="MassIVE" id="Q5JWF2"/>
<dbReference type="PaxDb" id="9606-ENSP00000360141"/>
<dbReference type="ProteomicsDB" id="63384">
    <molecule id="Q5JWF2-1"/>
</dbReference>
<dbReference type="ProteomicsDB" id="63385">
    <molecule id="Q5JWF2-2"/>
</dbReference>
<dbReference type="ProteomicsDB" id="63386">
    <molecule id="Q5JWF2-3"/>
</dbReference>
<dbReference type="Pumba" id="Q5JWF2"/>
<dbReference type="Antibodypedia" id="4152">
    <property type="antibodies" value="800 antibodies from 43 providers"/>
</dbReference>
<dbReference type="DNASU" id="2778"/>
<dbReference type="Ensembl" id="ENST00000371100.9">
    <molecule id="Q5JWF2-1"/>
    <property type="protein sequence ID" value="ENSP00000360141.3"/>
    <property type="gene ID" value="ENSG00000087460.29"/>
</dbReference>
<dbReference type="Ensembl" id="ENST00000371102.8">
    <molecule id="Q5JWF2-2"/>
    <property type="protein sequence ID" value="ENSP00000360143.4"/>
    <property type="gene ID" value="ENSG00000087460.29"/>
</dbReference>
<dbReference type="Ensembl" id="ENST00000481768.6">
    <molecule id="Q5JWF2-3"/>
    <property type="protein sequence ID" value="ENSP00000499644.2"/>
    <property type="gene ID" value="ENSG00000087460.29"/>
</dbReference>
<dbReference type="GeneID" id="2778"/>
<dbReference type="UCSC" id="uc002xzw.4">
    <molecule id="Q5JWF2-1"/>
    <property type="organism name" value="human"/>
</dbReference>
<dbReference type="AGR" id="HGNC:4392"/>
<dbReference type="CTD" id="2778"/>
<dbReference type="DisGeNET" id="2778"/>
<dbReference type="GeneCards" id="GNAS"/>
<dbReference type="GeneReviews" id="GNAS"/>
<dbReference type="HGNC" id="HGNC:4392">
    <property type="gene designation" value="GNAS"/>
</dbReference>
<dbReference type="HPA" id="ENSG00000087460">
    <property type="expression patterns" value="Low tissue specificity"/>
</dbReference>
<dbReference type="MalaCards" id="GNAS"/>
<dbReference type="MIM" id="139320">
    <property type="type" value="gene+phenotype"/>
</dbReference>
<dbReference type="MIM" id="219080">
    <property type="type" value="phenotype"/>
</dbReference>
<dbReference type="MIM" id="603233">
    <property type="type" value="phenotype"/>
</dbReference>
<dbReference type="MIM" id="612462">
    <property type="type" value="phenotype"/>
</dbReference>
<dbReference type="neXtProt" id="NX_Q5JWF2"/>
<dbReference type="OpenTargets" id="ENSG00000087460"/>
<dbReference type="PharmGKB" id="PA175"/>
<dbReference type="VEuPathDB" id="HostDB:ENSG00000087460"/>
<dbReference type="eggNOG" id="KOG0099">
    <property type="taxonomic scope" value="Eukaryota"/>
</dbReference>
<dbReference type="GeneTree" id="ENSGT00940000156300"/>
<dbReference type="HOGENOM" id="CLU_010619_0_0_1"/>
<dbReference type="InParanoid" id="Q5JWF2"/>
<dbReference type="OrthoDB" id="9836061at2759"/>
<dbReference type="PAN-GO" id="Q5JWF2">
    <property type="GO annotations" value="11 GO annotations based on evolutionary models"/>
</dbReference>
<dbReference type="PhylomeDB" id="Q5JWF2"/>
<dbReference type="TreeFam" id="TF300673"/>
<dbReference type="PathwayCommons" id="Q5JWF2"/>
<dbReference type="Reactome" id="R-HSA-163359">
    <property type="pathway name" value="Glucagon signaling in metabolic regulation"/>
</dbReference>
<dbReference type="Reactome" id="R-HSA-164378">
    <property type="pathway name" value="PKA activation in glucagon signalling"/>
</dbReference>
<dbReference type="Reactome" id="R-HSA-381676">
    <property type="pathway name" value="Glucagon-like Peptide-1 (GLP1) regulates insulin secretion"/>
</dbReference>
<dbReference type="Reactome" id="R-HSA-392851">
    <property type="pathway name" value="Prostacyclin signalling through prostacyclin receptor"/>
</dbReference>
<dbReference type="Reactome" id="R-HSA-418555">
    <property type="pathway name" value="G alpha (s) signalling events"/>
</dbReference>
<dbReference type="Reactome" id="R-HSA-418594">
    <property type="pathway name" value="G alpha (i) signalling events"/>
</dbReference>
<dbReference type="Reactome" id="R-HSA-418597">
    <property type="pathway name" value="G alpha (z) signalling events"/>
</dbReference>
<dbReference type="Reactome" id="R-HSA-420092">
    <property type="pathway name" value="Glucagon-type ligand receptors"/>
</dbReference>
<dbReference type="Reactome" id="R-HSA-432040">
    <property type="pathway name" value="Vasopressin regulates renal water homeostasis via Aquaporins"/>
</dbReference>
<dbReference type="Reactome" id="R-HSA-5610787">
    <property type="pathway name" value="Hedgehog 'off' state"/>
</dbReference>
<dbReference type="Reactome" id="R-HSA-9634597">
    <property type="pathway name" value="GPER1 signaling"/>
</dbReference>
<dbReference type="Reactome" id="R-HSA-9660821">
    <property type="pathway name" value="ADORA2B mediated anti-inflammatory cytokines production"/>
</dbReference>
<dbReference type="Reactome" id="R-HSA-9856530">
    <property type="pathway name" value="High laminar flow shear stress activates signaling by PIEZO1 and PECAM1:CDH5:KDR in endothelial cells"/>
</dbReference>
<dbReference type="SignaLink" id="Q5JWF2"/>
<dbReference type="SIGNOR" id="Q5JWF2"/>
<dbReference type="BioGRID-ORCS" id="2778">
    <property type="hits" value="33 hits in 1176 CRISPR screens"/>
</dbReference>
<dbReference type="CD-CODE" id="FB4E32DD">
    <property type="entry name" value="Presynaptic clusters and postsynaptic densities"/>
</dbReference>
<dbReference type="ChiTaRS" id="GNAS">
    <property type="organism name" value="human"/>
</dbReference>
<dbReference type="GenomeRNAi" id="2778"/>
<dbReference type="Pharos" id="Q5JWF2">
    <property type="development level" value="Tbio"/>
</dbReference>
<dbReference type="Proteomes" id="UP000005640">
    <property type="component" value="Chromosome 20"/>
</dbReference>
<dbReference type="RNAct" id="Q5JWF2">
    <property type="molecule type" value="protein"/>
</dbReference>
<dbReference type="Bgee" id="ENSG00000087460">
    <property type="expression patterns" value="Expressed in type B pancreatic cell and 215 other cell types or tissues"/>
</dbReference>
<dbReference type="ExpressionAtlas" id="Q5JWF2">
    <property type="expression patterns" value="baseline and differential"/>
</dbReference>
<dbReference type="GO" id="GO:0016324">
    <property type="term" value="C:apical plasma membrane"/>
    <property type="evidence" value="ECO:0007669"/>
    <property type="project" value="UniProtKB-SubCell"/>
</dbReference>
<dbReference type="GO" id="GO:0005737">
    <property type="term" value="C:cytoplasm"/>
    <property type="evidence" value="ECO:0000314"/>
    <property type="project" value="UniProt"/>
</dbReference>
<dbReference type="GO" id="GO:0005829">
    <property type="term" value="C:cytosol"/>
    <property type="evidence" value="ECO:0000314"/>
    <property type="project" value="UniProtKB"/>
</dbReference>
<dbReference type="GO" id="GO:0070062">
    <property type="term" value="C:extracellular exosome"/>
    <property type="evidence" value="ECO:0007005"/>
    <property type="project" value="UniProtKB"/>
</dbReference>
<dbReference type="GO" id="GO:0005834">
    <property type="term" value="C:heterotrimeric G-protein complex"/>
    <property type="evidence" value="ECO:0000318"/>
    <property type="project" value="GO_Central"/>
</dbReference>
<dbReference type="GO" id="GO:0016020">
    <property type="term" value="C:membrane"/>
    <property type="evidence" value="ECO:0000314"/>
    <property type="project" value="UniProtKB"/>
</dbReference>
<dbReference type="GO" id="GO:0010856">
    <property type="term" value="F:adenylate cyclase activator activity"/>
    <property type="evidence" value="ECO:0000250"/>
    <property type="project" value="UniProtKB"/>
</dbReference>
<dbReference type="GO" id="GO:0010854">
    <property type="term" value="F:adenylate cyclase regulator activity"/>
    <property type="evidence" value="ECO:0000314"/>
    <property type="project" value="UniProt"/>
</dbReference>
<dbReference type="GO" id="GO:0031698">
    <property type="term" value="F:beta-2 adrenergic receptor binding"/>
    <property type="evidence" value="ECO:0000318"/>
    <property type="project" value="GO_Central"/>
</dbReference>
<dbReference type="GO" id="GO:0051430">
    <property type="term" value="F:corticotropin-releasing hormone receptor 1 binding"/>
    <property type="evidence" value="ECO:0000318"/>
    <property type="project" value="GO_Central"/>
</dbReference>
<dbReference type="GO" id="GO:0031748">
    <property type="term" value="F:D1 dopamine receptor binding"/>
    <property type="evidence" value="ECO:0000318"/>
    <property type="project" value="GO_Central"/>
</dbReference>
<dbReference type="GO" id="GO:0003925">
    <property type="term" value="F:G protein activity"/>
    <property type="evidence" value="ECO:0000314"/>
    <property type="project" value="UniProt"/>
</dbReference>
<dbReference type="GO" id="GO:0031683">
    <property type="term" value="F:G-protein beta/gamma-subunit complex binding"/>
    <property type="evidence" value="ECO:0000318"/>
    <property type="project" value="GO_Central"/>
</dbReference>
<dbReference type="GO" id="GO:0005525">
    <property type="term" value="F:GTP binding"/>
    <property type="evidence" value="ECO:0007669"/>
    <property type="project" value="UniProtKB-KW"/>
</dbReference>
<dbReference type="GO" id="GO:0003924">
    <property type="term" value="F:GTPase activity"/>
    <property type="evidence" value="ECO:0000318"/>
    <property type="project" value="GO_Central"/>
</dbReference>
<dbReference type="GO" id="GO:0005159">
    <property type="term" value="F:insulin-like growth factor receptor binding"/>
    <property type="evidence" value="ECO:0000318"/>
    <property type="project" value="GO_Central"/>
</dbReference>
<dbReference type="GO" id="GO:0035255">
    <property type="term" value="F:ionotropic glutamate receptor binding"/>
    <property type="evidence" value="ECO:0000318"/>
    <property type="project" value="GO_Central"/>
</dbReference>
<dbReference type="GO" id="GO:0046872">
    <property type="term" value="F:metal ion binding"/>
    <property type="evidence" value="ECO:0007669"/>
    <property type="project" value="UniProtKB-KW"/>
</dbReference>
<dbReference type="GO" id="GO:0031852">
    <property type="term" value="F:mu-type opioid receptor binding"/>
    <property type="evidence" value="ECO:0000318"/>
    <property type="project" value="GO_Central"/>
</dbReference>
<dbReference type="GO" id="GO:0007191">
    <property type="term" value="P:adenylate cyclase-activating dopamine receptor signaling pathway"/>
    <property type="evidence" value="ECO:0000318"/>
    <property type="project" value="GO_Central"/>
</dbReference>
<dbReference type="GO" id="GO:0007189">
    <property type="term" value="P:adenylate cyclase-activating G protein-coupled receptor signaling pathway"/>
    <property type="evidence" value="ECO:0000314"/>
    <property type="project" value="UniProt"/>
</dbReference>
<dbReference type="GO" id="GO:0007192">
    <property type="term" value="P:adenylate cyclase-activating serotonin receptor signaling pathway"/>
    <property type="evidence" value="ECO:0000314"/>
    <property type="project" value="UniProt"/>
</dbReference>
<dbReference type="GO" id="GO:0060348">
    <property type="term" value="P:bone development"/>
    <property type="evidence" value="ECO:0000315"/>
    <property type="project" value="UniProtKB"/>
</dbReference>
<dbReference type="GO" id="GO:0048589">
    <property type="term" value="P:developmental growth"/>
    <property type="evidence" value="ECO:0000315"/>
    <property type="project" value="UniProtKB"/>
</dbReference>
<dbReference type="GO" id="GO:0070527">
    <property type="term" value="P:platelet aggregation"/>
    <property type="evidence" value="ECO:0000315"/>
    <property type="project" value="UniProtKB"/>
</dbReference>
<dbReference type="GO" id="GO:0120162">
    <property type="term" value="P:positive regulation of cold-induced thermogenesis"/>
    <property type="evidence" value="ECO:0000250"/>
    <property type="project" value="YuBioLab"/>
</dbReference>
<dbReference type="GO" id="GO:0034695">
    <property type="term" value="P:response to prostaglandin E"/>
    <property type="evidence" value="ECO:0000314"/>
    <property type="project" value="UniProt"/>
</dbReference>
<dbReference type="GO" id="GO:0007606">
    <property type="term" value="P:sensory perception of chemical stimulus"/>
    <property type="evidence" value="ECO:0000318"/>
    <property type="project" value="GO_Central"/>
</dbReference>
<dbReference type="CDD" id="cd00066">
    <property type="entry name" value="G-alpha"/>
    <property type="match status" value="1"/>
</dbReference>
<dbReference type="CDD" id="cd22249">
    <property type="entry name" value="UDM1_RNF168_RNF169-like"/>
    <property type="match status" value="1"/>
</dbReference>
<dbReference type="FunFam" id="1.10.400.10:FF:000003">
    <property type="entry name" value="Guanine nucleotide-binding protein G(S) subunit alpha"/>
    <property type="match status" value="1"/>
</dbReference>
<dbReference type="FunFam" id="3.40.50.300:FF:006178">
    <property type="entry name" value="Guanine nucleotide-binding protein G(s) subunit alpha isoforms short"/>
    <property type="match status" value="2"/>
</dbReference>
<dbReference type="Gene3D" id="1.10.400.10">
    <property type="entry name" value="GI Alpha 1, domain 2-like"/>
    <property type="match status" value="1"/>
</dbReference>
<dbReference type="Gene3D" id="3.40.50.300">
    <property type="entry name" value="P-loop containing nucleotide triphosphate hydrolases"/>
    <property type="match status" value="1"/>
</dbReference>
<dbReference type="InterPro" id="IPR000367">
    <property type="entry name" value="Gprotein_alpha_S"/>
</dbReference>
<dbReference type="InterPro" id="IPR001019">
    <property type="entry name" value="Gprotein_alpha_su"/>
</dbReference>
<dbReference type="InterPro" id="IPR011025">
    <property type="entry name" value="GproteinA_insert"/>
</dbReference>
<dbReference type="InterPro" id="IPR027417">
    <property type="entry name" value="P-loop_NTPase"/>
</dbReference>
<dbReference type="PANTHER" id="PTHR10218">
    <property type="entry name" value="GTP-BINDING PROTEIN ALPHA SUBUNIT"/>
    <property type="match status" value="1"/>
</dbReference>
<dbReference type="PANTHER" id="PTHR10218:SF348">
    <property type="entry name" value="GUANINE NUCLEOTIDE-BINDING PROTEIN G(S) SUBUNIT ALPHA ISOFORMS XLAS"/>
    <property type="match status" value="1"/>
</dbReference>
<dbReference type="Pfam" id="PF00503">
    <property type="entry name" value="G-alpha"/>
    <property type="match status" value="1"/>
</dbReference>
<dbReference type="PRINTS" id="PR00318">
    <property type="entry name" value="GPROTEINA"/>
</dbReference>
<dbReference type="PRINTS" id="PR00443">
    <property type="entry name" value="GPROTEINAS"/>
</dbReference>
<dbReference type="SMART" id="SM00275">
    <property type="entry name" value="G_alpha"/>
    <property type="match status" value="1"/>
</dbReference>
<dbReference type="SUPFAM" id="SSF52540">
    <property type="entry name" value="P-loop containing nucleoside triphosphate hydrolases"/>
    <property type="match status" value="1"/>
</dbReference>
<dbReference type="SUPFAM" id="SSF47895">
    <property type="entry name" value="Transducin (alpha subunit), insertion domain"/>
    <property type="match status" value="1"/>
</dbReference>
<dbReference type="PROSITE" id="PS51882">
    <property type="entry name" value="G_ALPHA"/>
    <property type="match status" value="1"/>
</dbReference>
<evidence type="ECO:0000250" key="1"/>
<evidence type="ECO:0000250" key="2">
    <source>
        <dbReference type="UniProtKB" id="P04896"/>
    </source>
</evidence>
<evidence type="ECO:0000250" key="3">
    <source>
        <dbReference type="UniProtKB" id="P63096"/>
    </source>
</evidence>
<evidence type="ECO:0000250" key="4">
    <source>
        <dbReference type="UniProtKB" id="Q63803"/>
    </source>
</evidence>
<evidence type="ECO:0000250" key="5">
    <source>
        <dbReference type="UniProtKB" id="Q6R0H7"/>
    </source>
</evidence>
<evidence type="ECO:0000255" key="6"/>
<evidence type="ECO:0000255" key="7">
    <source>
        <dbReference type="PROSITE-ProRule" id="PRU01230"/>
    </source>
</evidence>
<evidence type="ECO:0000256" key="8">
    <source>
        <dbReference type="SAM" id="MobiDB-lite"/>
    </source>
</evidence>
<evidence type="ECO:0000269" key="9">
    <source>
    </source>
</evidence>
<evidence type="ECO:0000269" key="10">
    <source>
    </source>
</evidence>
<evidence type="ECO:0000269" key="11">
    <source>
    </source>
</evidence>
<evidence type="ECO:0000269" key="12">
    <source>
    </source>
</evidence>
<evidence type="ECO:0000269" key="13">
    <source>
    </source>
</evidence>
<evidence type="ECO:0000269" key="14">
    <source>
    </source>
</evidence>
<evidence type="ECO:0000269" key="15">
    <source>
    </source>
</evidence>
<evidence type="ECO:0000269" key="16">
    <source>
    </source>
</evidence>
<evidence type="ECO:0000269" key="17">
    <source>
    </source>
</evidence>
<evidence type="ECO:0000269" key="18">
    <source>
    </source>
</evidence>
<evidence type="ECO:0000269" key="19">
    <source>
    </source>
</evidence>
<evidence type="ECO:0000269" key="20">
    <source>
    </source>
</evidence>
<evidence type="ECO:0000303" key="21">
    <source>
    </source>
</evidence>
<evidence type="ECO:0000305" key="22"/>
<evidence type="ECO:0000312" key="23">
    <source>
        <dbReference type="EMBL" id="AAX51890.1"/>
    </source>
</evidence>
<evidence type="ECO:0000312" key="24">
    <source>
        <dbReference type="EMBL" id="CAA12165.1"/>
    </source>
</evidence>
<evidence type="ECO:0000312" key="25">
    <source>
        <dbReference type="EMBL" id="CAB83215.1"/>
    </source>
</evidence>
<evidence type="ECO:0007744" key="26">
    <source>
    </source>
</evidence>
<evidence type="ECO:0007829" key="27">
    <source>
        <dbReference type="PDB" id="8I2G"/>
    </source>
</evidence>
<evidence type="ECO:0007829" key="28">
    <source>
        <dbReference type="PDB" id="8JHI"/>
    </source>
</evidence>
<evidence type="ECO:0007829" key="29">
    <source>
        <dbReference type="PDB" id="8WW2"/>
    </source>
</evidence>
<evidence type="ECO:0007829" key="30">
    <source>
        <dbReference type="PDB" id="9BKK"/>
    </source>
</evidence>
<gene>
    <name type="primary">GNAS</name>
    <name evidence="21" type="synonym">GNAS1</name>
</gene>
<keyword id="KW-0002">3D-structure</keyword>
<keyword id="KW-0013">ADP-ribosylation</keyword>
<keyword id="KW-0025">Alternative splicing</keyword>
<keyword id="KW-1003">Cell membrane</keyword>
<keyword id="KW-0175">Coiled coil</keyword>
<keyword id="KW-1062">Cushing syndrome</keyword>
<keyword id="KW-0225">Disease variant</keyword>
<keyword id="KW-0342">GTP-binding</keyword>
<keyword id="KW-0378">Hydrolase</keyword>
<keyword id="KW-0460">Magnesium</keyword>
<keyword id="KW-0472">Membrane</keyword>
<keyword id="KW-0479">Metal-binding</keyword>
<keyword id="KW-0547">Nucleotide-binding</keyword>
<keyword id="KW-0597">Phosphoprotein</keyword>
<keyword id="KW-1267">Proteomics identification</keyword>
<keyword id="KW-1185">Reference proteome</keyword>
<keyword id="KW-0807">Transducer</keyword>
<proteinExistence type="evidence at protein level"/>
<protein>
    <recommendedName>
        <fullName>Guanine nucleotide-binding protein G(s) subunit alpha isoforms XLas</fullName>
        <ecNumber evidence="5">3.6.5.-</ecNumber>
    </recommendedName>
    <alternativeName>
        <fullName>Adenylate cyclase-stimulating G alpha protein</fullName>
    </alternativeName>
    <alternativeName>
        <fullName>Extra large alphas protein</fullName>
        <shortName>XLalphas</shortName>
    </alternativeName>
</protein>
<name>GNAS1_HUMAN</name>
<accession>Q5JWF2</accession>
<accession>A2A2S3</accession>
<accession>E1P5G3</accession>
<accession>O75684</accession>
<accession>O75685</accession>
<accession>Q5JW67</accession>
<accession>Q5JWF1</accession>
<accession>Q9NY42</accession>
<organism>
    <name type="scientific">Homo sapiens</name>
    <name type="common">Human</name>
    <dbReference type="NCBI Taxonomy" id="9606"/>
    <lineage>
        <taxon>Eukaryota</taxon>
        <taxon>Metazoa</taxon>
        <taxon>Chordata</taxon>
        <taxon>Craniata</taxon>
        <taxon>Vertebrata</taxon>
        <taxon>Euteleostomi</taxon>
        <taxon>Mammalia</taxon>
        <taxon>Eutheria</taxon>
        <taxon>Euarchontoglires</taxon>
        <taxon>Primates</taxon>
        <taxon>Haplorrhini</taxon>
        <taxon>Catarrhini</taxon>
        <taxon>Hominidae</taxon>
        <taxon>Homo</taxon>
    </lineage>
</organism>
<sequence length="1037" mass="111025">MGVRNCLYGNNMSGQRDIPPEIGEQPEQPPLEAPGAAAPGAGPSPAEEMETEPPHNEPIPVENDGEACGPPEVSRPNFQVLNPAFREAGAHGSYSPPPEEAMPFEAEQPSLGGFWPTLEQPGFPSGVHAGLEAFGPALMEPGAFSGARPGLGGYSPPPEEAMPFEFDQPAQRGCSQLLLQVPDLAPGGPGAAGVPGAPPEEPQALRPAKAGSRGGYSPPPEETMPFELDGEGFGDDSPPPGLSRVIAQVDGSSQFAAVAASSAVRLTPAANAPPLWVPGAIGSPSQEAVRPPSNFTGSSPWMEISGPPFEIGSAPAGVDDTPVNMDSPPIALDGPPIKVSGAPDKRERAERPPVEEEAAEMEGAADAAEGGKVPSPGYGSPAAGAASADTAARAAPAAPADPDSGATPEDPDSGTAPADPDSGAFAADPDSGAAPAAPADPDSGAAPDAPADPDSGAAPDAPADPDAGAAPEAPAAPAAAETRAAHVAPAAPDAGAPTAPAASATRAAQVRRAASAAPASGARRKIHLRPPSPEIQAADPPTPRPTRASAWRGKSESSRGRRVYYDEGVASSDDDSSGDESDDGTSGCLRWFQHRRNRRRRKPQRNLLRNFLVQAFGGCFGRSESPQPKASRSLKVKKVPLAEKRRQMRKEALEKRAQKRAEKKRSKLIDKQLQDEKMGYMCTHRLLLLGAGESGKSTIVKQMRILHVNGFNGEGGEEDPQAARSNSDGEKATKVQDIKNNLKEAIETIVAAMSNLVPPVELANPENQFRVDYILSVMNVPDFDFPPEFYEHAKALWEDEGVRACYERSNEYQLIDCAQYFLDKIDVIKQADYVPSDQDLLRCRVLTSGIFETKFQVDKVNFHMFDVGGQRDERRKWIQCFNDVTAIIFVVASSSYNMVIREDNQTNRLQEALNLFKSIWNNRWLRTISVILFLNKQDLLAEKVLAGKSKIEDYFPEFARYTTPEDATPEPGEDPRVTRAKYFIRDEFLRISTASGDGRHYCYPHFTCAVDTENIRRVFNDCRDIIQRMHLRQYELL</sequence>
<reference key="1">
    <citation type="journal article" date="2001" name="Nature">
        <title>The DNA sequence and comparative analysis of human chromosome 20.</title>
        <authorList>
            <person name="Deloukas P."/>
            <person name="Matthews L.H."/>
            <person name="Ashurst J.L."/>
            <person name="Burton J."/>
            <person name="Gilbert J.G.R."/>
            <person name="Jones M."/>
            <person name="Stavrides G."/>
            <person name="Almeida J.P."/>
            <person name="Babbage A.K."/>
            <person name="Bagguley C.L."/>
            <person name="Bailey J."/>
            <person name="Barlow K.F."/>
            <person name="Bates K.N."/>
            <person name="Beard L.M."/>
            <person name="Beare D.M."/>
            <person name="Beasley O.P."/>
            <person name="Bird C.P."/>
            <person name="Blakey S.E."/>
            <person name="Bridgeman A.M."/>
            <person name="Brown A.J."/>
            <person name="Buck D."/>
            <person name="Burrill W.D."/>
            <person name="Butler A.P."/>
            <person name="Carder C."/>
            <person name="Carter N.P."/>
            <person name="Chapman J.C."/>
            <person name="Clamp M."/>
            <person name="Clark G."/>
            <person name="Clark L.N."/>
            <person name="Clark S.Y."/>
            <person name="Clee C.M."/>
            <person name="Clegg S."/>
            <person name="Cobley V.E."/>
            <person name="Collier R.E."/>
            <person name="Connor R.E."/>
            <person name="Corby N.R."/>
            <person name="Coulson A."/>
            <person name="Coville G.J."/>
            <person name="Deadman R."/>
            <person name="Dhami P.D."/>
            <person name="Dunn M."/>
            <person name="Ellington A.G."/>
            <person name="Frankland J.A."/>
            <person name="Fraser A."/>
            <person name="French L."/>
            <person name="Garner P."/>
            <person name="Grafham D.V."/>
            <person name="Griffiths C."/>
            <person name="Griffiths M.N.D."/>
            <person name="Gwilliam R."/>
            <person name="Hall R.E."/>
            <person name="Hammond S."/>
            <person name="Harley J.L."/>
            <person name="Heath P.D."/>
            <person name="Ho S."/>
            <person name="Holden J.L."/>
            <person name="Howden P.J."/>
            <person name="Huckle E."/>
            <person name="Hunt A.R."/>
            <person name="Hunt S.E."/>
            <person name="Jekosch K."/>
            <person name="Johnson C.M."/>
            <person name="Johnson D."/>
            <person name="Kay M.P."/>
            <person name="Kimberley A.M."/>
            <person name="King A."/>
            <person name="Knights A."/>
            <person name="Laird G.K."/>
            <person name="Lawlor S."/>
            <person name="Lehvaeslaiho M.H."/>
            <person name="Leversha M.A."/>
            <person name="Lloyd C."/>
            <person name="Lloyd D.M."/>
            <person name="Lovell J.D."/>
            <person name="Marsh V.L."/>
            <person name="Martin S.L."/>
            <person name="McConnachie L.J."/>
            <person name="McLay K."/>
            <person name="McMurray A.A."/>
            <person name="Milne S.A."/>
            <person name="Mistry D."/>
            <person name="Moore M.J.F."/>
            <person name="Mullikin J.C."/>
            <person name="Nickerson T."/>
            <person name="Oliver K."/>
            <person name="Parker A."/>
            <person name="Patel R."/>
            <person name="Pearce T.A.V."/>
            <person name="Peck A.I."/>
            <person name="Phillimore B.J.C.T."/>
            <person name="Prathalingam S.R."/>
            <person name="Plumb R.W."/>
            <person name="Ramsay H."/>
            <person name="Rice C.M."/>
            <person name="Ross M.T."/>
            <person name="Scott C.E."/>
            <person name="Sehra H.K."/>
            <person name="Shownkeen R."/>
            <person name="Sims S."/>
            <person name="Skuce C.D."/>
            <person name="Smith M.L."/>
            <person name="Soderlund C."/>
            <person name="Steward C.A."/>
            <person name="Sulston J.E."/>
            <person name="Swann R.M."/>
            <person name="Sycamore N."/>
            <person name="Taylor R."/>
            <person name="Tee L."/>
            <person name="Thomas D.W."/>
            <person name="Thorpe A."/>
            <person name="Tracey A."/>
            <person name="Tromans A.C."/>
            <person name="Vaudin M."/>
            <person name="Wall M."/>
            <person name="Wallis J.M."/>
            <person name="Whitehead S.L."/>
            <person name="Whittaker P."/>
            <person name="Willey D.L."/>
            <person name="Williams L."/>
            <person name="Williams S.A."/>
            <person name="Wilming L."/>
            <person name="Wray P.W."/>
            <person name="Hubbard T."/>
            <person name="Durbin R.M."/>
            <person name="Bentley D.R."/>
            <person name="Beck S."/>
            <person name="Rogers J."/>
        </authorList>
    </citation>
    <scope>NUCLEOTIDE SEQUENCE [LARGE SCALE GENOMIC DNA]</scope>
</reference>
<reference key="2">
    <citation type="submission" date="2005-09" db="EMBL/GenBank/DDBJ databases">
        <authorList>
            <person name="Mural R.J."/>
            <person name="Istrail S."/>
            <person name="Sutton G.G."/>
            <person name="Florea L."/>
            <person name="Halpern A.L."/>
            <person name="Mobarry C.M."/>
            <person name="Lippert R."/>
            <person name="Walenz B."/>
            <person name="Shatkay H."/>
            <person name="Dew I."/>
            <person name="Miller J.R."/>
            <person name="Flanigan M.J."/>
            <person name="Edwards N.J."/>
            <person name="Bolanos R."/>
            <person name="Fasulo D."/>
            <person name="Halldorsson B.V."/>
            <person name="Hannenhalli S."/>
            <person name="Turner R."/>
            <person name="Yooseph S."/>
            <person name="Lu F."/>
            <person name="Nusskern D.R."/>
            <person name="Shue B.C."/>
            <person name="Zheng X.H."/>
            <person name="Zhong F."/>
            <person name="Delcher A.L."/>
            <person name="Huson D.H."/>
            <person name="Kravitz S.A."/>
            <person name="Mouchard L."/>
            <person name="Reinert K."/>
            <person name="Remington K.A."/>
            <person name="Clark A.G."/>
            <person name="Waterman M.S."/>
            <person name="Eichler E.E."/>
            <person name="Adams M.D."/>
            <person name="Hunkapiller M.W."/>
            <person name="Myers E.W."/>
            <person name="Venter J.C."/>
        </authorList>
    </citation>
    <scope>NUCLEOTIDE SEQUENCE [LARGE SCALE GENOMIC DNA]</scope>
</reference>
<reference evidence="22 25" key="3">
    <citation type="journal article" date="2000" name="Hum. Mol. Genet.">
        <title>An imprinted antisense transcript at the human GNAS1 locus.</title>
        <authorList>
            <person name="Hayward B.E."/>
            <person name="Bonthron D.T."/>
        </authorList>
    </citation>
    <scope>NUCLEOTIDE SEQUENCE [GENOMIC DNA] OF 1-689</scope>
</reference>
<reference evidence="22 24" key="4">
    <citation type="journal article" date="1998" name="Proc. Natl. Acad. Sci. U.S.A.">
        <title>The human GNAS1 gene is imprinted and encodes distinct paternally and biallelically expressed G proteins.</title>
        <authorList>
            <person name="Hayward B.E."/>
            <person name="Kamiya M."/>
            <person name="Strain L."/>
            <person name="Moran V."/>
            <person name="Campbell R."/>
            <person name="Hayashizaki Y."/>
            <person name="Bonthron D.T."/>
        </authorList>
    </citation>
    <scope>NUCLEOTIDE SEQUENCE [GENOMIC DNA / MRNA] OF 197-1037 (ISOFORM XLAS-3)</scope>
</reference>
<reference evidence="22 23" key="5">
    <citation type="journal article" date="2005" name="PLoS Genet.">
        <title>Oscillating evolution of a mammalian locus with overlapping reading frames: an XLalphas/ALEX relay.</title>
        <authorList>
            <person name="Nekrutenko A."/>
            <person name="Wadhawan S."/>
            <person name="Goetting-Minesky P."/>
            <person name="Makova K.D."/>
        </authorList>
    </citation>
    <scope>NUCLEOTIDE SEQUENCE [GENOMIC DNA] OF 302-689</scope>
</reference>
<reference key="6">
    <citation type="journal article" date="2002" name="J. Clin. Endocrinol. Metab.">
        <title>GNAS1 lesions in pseudohypoparathyroidism Ia and Ic: genotype phenotype relationship and evidence of the maternal transmission of the hormonal resistance.</title>
        <authorList>
            <person name="Linglart A."/>
            <person name="Carel J.-C."/>
            <person name="Garabedian M."/>
            <person name="Le T."/>
            <person name="Mallet E."/>
            <person name="Kottler M.-L."/>
        </authorList>
    </citation>
    <scope>INVOLVEMENT IN PHP1C</scope>
</reference>
<reference evidence="22" key="7">
    <citation type="journal article" date="2004" name="Proc. Natl. Acad. Sci. U.S.A.">
        <title>XL alpha-s, the extra-long form of the alpha subunit of the Gs G protein, is significantly longer than suspected, and so is its companion Alex.</title>
        <authorList>
            <person name="Abramowitz J."/>
            <person name="Grenet D."/>
            <person name="Birnbaumer M."/>
            <person name="Torres H.N."/>
            <person name="Birnbaumer L."/>
        </authorList>
    </citation>
    <scope>IDENTIFICATION</scope>
</reference>
<reference key="8">
    <citation type="journal article" date="2000" name="J. Clin. Invest.">
        <title>A GNAS1 imprinting defect in pseudohypoparathyroidism type IB.</title>
        <authorList>
            <person name="Liu J."/>
            <person name="Litman D."/>
            <person name="Rosenberg M.J."/>
            <person name="Yu S."/>
            <person name="Biesecker L.G."/>
            <person name="Weinstein L.S."/>
        </authorList>
    </citation>
    <scope>INVOLVEMENT IN PHP1B</scope>
</reference>
<reference key="9">
    <citation type="journal article" date="2001" name="Am. J. Hum. Genet.">
        <title>Paternal uniparental isodisomy of chromosome 20q -- and the resulting changes in GNAS1 methylation -- as a plausible cause of pseudohypoparathyroidism.</title>
        <authorList>
            <person name="Bastepe M."/>
            <person name="Lane A.H."/>
            <person name="Jueppner H."/>
        </authorList>
    </citation>
    <scope>INVOLVEMENT IN PHP1B</scope>
</reference>
<reference key="10">
    <citation type="journal article" date="2001" name="J. Biol. Chem.">
        <title>Selective resistance to parathyroid hormone caused by a novel uncoupling mutation in the carboxyl terminus of G alpha(s). A cause of pseudohypoparathyroidism type Ib.</title>
        <authorList>
            <person name="Wu W.-I."/>
            <person name="Schwindinger W.F."/>
            <person name="Aparicio L.F."/>
            <person name="Levine M.A."/>
        </authorList>
    </citation>
    <scope>INVOLVEMENT IN PHP1B</scope>
</reference>
<reference key="11">
    <citation type="journal article" date="2010" name="Sci. Signal.">
        <title>Quantitative phosphoproteomics reveals widespread full phosphorylation site occupancy during mitosis.</title>
        <authorList>
            <person name="Olsen J.V."/>
            <person name="Vermeulen M."/>
            <person name="Santamaria A."/>
            <person name="Kumar C."/>
            <person name="Miller M.L."/>
            <person name="Jensen L.J."/>
            <person name="Gnad F."/>
            <person name="Cox J."/>
            <person name="Jensen T.S."/>
            <person name="Nigg E.A."/>
            <person name="Brunak S."/>
            <person name="Mann M."/>
        </authorList>
    </citation>
    <scope>PHOSPHORYLATION [LARGE SCALE ANALYSIS] AT SER-995</scope>
    <scope>IDENTIFICATION BY MASS SPECTROMETRY [LARGE SCALE ANALYSIS]</scope>
    <source>
        <tissue>Cervix carcinoma</tissue>
    </source>
</reference>
<reference key="12">
    <citation type="journal article" date="2011" name="BMC Syst. Biol.">
        <title>Initial characterization of the human central proteome.</title>
        <authorList>
            <person name="Burkard T.R."/>
            <person name="Planyavsky M."/>
            <person name="Kaupe I."/>
            <person name="Breitwieser F.P."/>
            <person name="Buerckstuemmer T."/>
            <person name="Bennett K.L."/>
            <person name="Superti-Furga G."/>
            <person name="Colinge J."/>
        </authorList>
    </citation>
    <scope>IDENTIFICATION BY MASS SPECTROMETRY [LARGE SCALE ANALYSIS]</scope>
</reference>
<reference key="13">
    <citation type="journal article" date="2014" name="J. Proteomics">
        <title>An enzyme assisted RP-RPLC approach for in-depth analysis of human liver phosphoproteome.</title>
        <authorList>
            <person name="Bian Y."/>
            <person name="Song C."/>
            <person name="Cheng K."/>
            <person name="Dong M."/>
            <person name="Wang F."/>
            <person name="Huang J."/>
            <person name="Sun D."/>
            <person name="Wang L."/>
            <person name="Ye M."/>
            <person name="Zou H."/>
        </authorList>
    </citation>
    <scope>IDENTIFICATION BY MASS SPECTROMETRY [LARGE SCALE ANALYSIS]</scope>
    <source>
        <tissue>Liver</tissue>
    </source>
</reference>
<reference key="14">
    <citation type="journal article" date="2015" name="Proteomics">
        <title>N-terminome analysis of the human mitochondrial proteome.</title>
        <authorList>
            <person name="Vaca Jacome A.S."/>
            <person name="Rabilloud T."/>
            <person name="Schaeffer-Reiss C."/>
            <person name="Rompais M."/>
            <person name="Ayoub D."/>
            <person name="Lane L."/>
            <person name="Bairoch A."/>
            <person name="Van Dorsselaer A."/>
            <person name="Carapito C."/>
        </authorList>
    </citation>
    <scope>IDENTIFICATION BY MASS SPECTROMETRY [LARGE SCALE ANALYSIS]</scope>
</reference>
<reference evidence="22" key="15">
    <citation type="journal article" date="2001" name="Thromb. Haemost.">
        <title>Genetic variation of the extra-large stimulatory G protein alpha-subunit leads to Gs hyperfunction in platelets and is a risk factor for bleeding.</title>
        <authorList>
            <person name="Freson K."/>
            <person name="Hoylaerts M.F."/>
            <person name="Jaeken J."/>
            <person name="Eyssen M."/>
            <person name="Arnout J."/>
            <person name="Vermylen J."/>
            <person name="Van Geet C."/>
        </authorList>
    </citation>
    <scope>VARIANTS GNASHYP ASP-436; PRO-ALA-ASP-PRO-ASP-SER-GLY-ALA-ALA-PRO-ASP-ALA-437 INS AND ARG-459</scope>
</reference>
<reference key="16">
    <citation type="journal article" date="2003" name="Am. J. Hum. Genet.">
        <title>Discordance between genetic and epigenetic defects in pseudohypoparathyroidism type 1b revealed by inconsistent loss of maternal imprinting at GNAS1.</title>
        <authorList>
            <person name="Jan de Beur S."/>
            <person name="Ding C."/>
            <person name="Germain-Lee E."/>
            <person name="Cho J."/>
            <person name="Maret A."/>
            <person name="Levine M.A."/>
        </authorList>
    </citation>
    <scope>INVOLVEMENT IN PHP1B</scope>
</reference>
<reference evidence="22" key="17">
    <citation type="journal article" date="2003" name="Hum. Mol. Genet.">
        <title>Functional polymorphisms in the paternally expressed XLalphas and its cofactor ALEX decrease their mutual interaction and enhance receptor-mediated cAMP formation.</title>
        <authorList>
            <person name="Freson K."/>
            <person name="Jaeken J."/>
            <person name="Van Helvoirt M."/>
            <person name="de Zegher F."/>
            <person name="Wittevrongel C."/>
            <person name="Thys C."/>
            <person name="Hoylaerts M.F."/>
            <person name="Vermylen J."/>
            <person name="Van Geet C."/>
        </authorList>
    </citation>
    <scope>VARIANTS GNASHYP ASP-436; PRO-ALA-ASP-PRO-ASP-SER-GLY-ALA-ALA-PRO-ASP-ALA-437 INS AND ARG-459</scope>
</reference>
<reference key="18">
    <citation type="journal article" date="2003" name="J. Clin. Endocrinol. Metab.">
        <title>Cushing's syndrome secondary to adrenocorticotropin-independent macronodular adrenocortical hyperplasia due to activating mutations of GNAS1 gene.</title>
        <authorList>
            <person name="Fragoso M.C.B.V."/>
            <person name="Domenice S."/>
            <person name="Latronico A.C."/>
            <person name="Martin R.M."/>
            <person name="Pereira M.A.A."/>
            <person name="Zerbini M.C.N."/>
            <person name="Lucon A.M."/>
            <person name="Mendonca B.B."/>
        </authorList>
    </citation>
    <scope>INVOLVEMENT IN AIMAH1</scope>
</reference>
<reference key="19">
    <citation type="journal article" date="2003" name="J. Clin. Invest.">
        <title>Autosomal dominant pseudohypoparathyroidism type Ib is associated with a heterozygous microdeletion that likely disrupts a putative imprinting control element of GNAS.</title>
        <authorList>
            <person name="Bastepe M."/>
            <person name="Froehlich L.F."/>
            <person name="Hendy G.N."/>
            <person name="Indridason O.S."/>
            <person name="Josse R.G."/>
            <person name="Koshiyama H."/>
            <person name="Koerkkoe J."/>
            <person name="Nakamoto J.M."/>
            <person name="Rosenbloom A.L."/>
            <person name="Slyper A.H."/>
            <person name="Sugimoto T."/>
            <person name="Tsatsoulis A."/>
            <person name="Crawford J.D."/>
            <person name="Jueppner H."/>
        </authorList>
    </citation>
    <scope>INVOLVEMENT IN PHP1B</scope>
</reference>
<reference key="20">
    <citation type="journal article" date="2005" name="Am. J. Hum. Genet.">
        <title>A novel STX16 deletion in autosomal dominant pseudohypoparathyroidism type Ib redefines the boundaries of a cis-acting imprinting control element of GNAS.</title>
        <authorList>
            <person name="Linglart A."/>
            <person name="Gensure R.C."/>
            <person name="Olney R.C."/>
            <person name="Jueppner H."/>
            <person name="Bastepe M."/>
        </authorList>
    </citation>
    <scope>INVOLVEMENT IN PHP1B</scope>
</reference>
<reference key="21">
    <citation type="journal article" date="2005" name="Nat. Genet.">
        <title>Deletion of the NESP55 differentially methylated region causes loss of maternal GNAS imprints and pseudohypoparathyroidism type Ib.</title>
        <authorList>
            <person name="Bastepe M."/>
            <person name="Froehlich L.F."/>
            <person name="Linglart A."/>
            <person name="Abu-Zahra H.S."/>
            <person name="Tojo K."/>
            <person name="Ward L.M."/>
            <person name="Jueppner H."/>
        </authorList>
    </citation>
    <scope>INVOLVEMENT IN PHP1B</scope>
</reference>
<reference key="22">
    <citation type="journal article" date="2016" name="N. Engl. J. Med.">
        <title>Polyhydramnios, transient antenatal Bartter's syndrome, and MAGED2 mutations.</title>
        <authorList>
            <person name="Laghmani K."/>
            <person name="Beck B.B."/>
            <person name="Yang S.S."/>
            <person name="Seaayfan E."/>
            <person name="Wenzel A."/>
            <person name="Reusch B."/>
            <person name="Vitzthum H."/>
            <person name="Priem D."/>
            <person name="Demaretz S."/>
            <person name="Bergmann K."/>
            <person name="Duin L.K."/>
            <person name="Goebel H."/>
            <person name="Mache C."/>
            <person name="Thiele H."/>
            <person name="Bartram M.P."/>
            <person name="Dombret C."/>
            <person name="Altmueller J."/>
            <person name="Nuernberg P."/>
            <person name="Benzing T."/>
            <person name="Levtchenko E."/>
            <person name="Seyberth H.W."/>
            <person name="Klaus G."/>
            <person name="Yigit G."/>
            <person name="Lin S.H."/>
            <person name="Timmer A."/>
            <person name="de Koning T.J."/>
            <person name="Scherjon S.A."/>
            <person name="Schlingmann K.P."/>
            <person name="Bertrand M.J."/>
            <person name="Rinschen M.M."/>
            <person name="de Backer O."/>
            <person name="Konrad M."/>
            <person name="Koemhoff M."/>
        </authorList>
    </citation>
    <scope>INTERACTION WITH MAGED2</scope>
    <scope>SUBCELLULAR LOCATION</scope>
</reference>
<comment type="function">
    <text evidence="5">Guanine nucleotide-binding proteins (G proteins) function as transducers in numerous signaling pathways controlled by G protein-coupled receptors (GPCRs). The alpha chain contains the guanine nucleotide binding site and alternates between an active, GTP-bound state and an inactive, GDP-bound state. Signaling by an activated GPCR promotes GDP release and GTP binding. The alpha subunit has a low GTPase activity that converts bound GTP to GDP, thereby terminating the signal. Both GDP release and GTP hydrolysis are modulated by numerous regulatory proteins. Signaling involves the activation of adenylyl cyclases, resulting in increased levels of the signaling molecule cAMP. GNAS functions downstream of several GPCRs, including beta-adrenergic receptors. XLas isoforms interact with the same set of receptors as Gnas isoforms.</text>
</comment>
<comment type="catalytic activity">
    <reaction evidence="5">
        <text>GTP + H2O = GDP + phosphate + H(+)</text>
        <dbReference type="Rhea" id="RHEA:19669"/>
        <dbReference type="ChEBI" id="CHEBI:15377"/>
        <dbReference type="ChEBI" id="CHEBI:15378"/>
        <dbReference type="ChEBI" id="CHEBI:37565"/>
        <dbReference type="ChEBI" id="CHEBI:43474"/>
        <dbReference type="ChEBI" id="CHEBI:58189"/>
    </reaction>
    <physiologicalReaction direction="left-to-right" evidence="5">
        <dbReference type="Rhea" id="RHEA:19670"/>
    </physiologicalReaction>
</comment>
<comment type="subunit">
    <text evidence="4 5 20">G proteins are composed of 3 units; alpha, beta and gamma. The alpha chain contains the guanine nucleotide binding site. Interacts through its N-terminal region with ALEX which is produced from the same locus in a different open reading frame. This interaction may inhibit its adenylyl cyclase-stimulating activity (By similarity). Interacts with MAGED2 (PubMed:27120771).</text>
</comment>
<comment type="interaction">
    <interactant intactId="EBI-4400880">
        <id>Q5JWF2</id>
    </interactant>
    <interactant intactId="EBI-46447105">
        <id>Q5T601</id>
        <label>ADGRF1</label>
    </interactant>
    <organismsDiffer>false</organismsDiffer>
    <experiments>2</experiments>
</comment>
<comment type="interaction">
    <interactant intactId="EBI-4400880">
        <id>Q5JWF2</id>
    </interactant>
    <interactant intactId="EBI-743313">
        <id>P49407</id>
        <label>ARRB1</label>
    </interactant>
    <organismsDiffer>false</organismsDiffer>
    <experiments>5</experiments>
</comment>
<comment type="subcellular location">
    <subcellularLocation>
        <location evidence="20">Cell membrane</location>
        <topology evidence="4">Peripheral membrane protein</topology>
    </subcellularLocation>
    <subcellularLocation>
        <location evidence="20">Apical cell membrane</location>
    </subcellularLocation>
</comment>
<comment type="alternative products">
    <event type="alternative splicing"/>
    <isoform>
        <id>Q5JWF2-1</id>
        <name>XLas-1</name>
        <sequence type="displayed"/>
    </isoform>
    <isoform>
        <id>Q5JWF2-2</id>
        <name>XLas-2</name>
        <sequence type="described" ref="VSP_052174"/>
    </isoform>
    <isoform>
        <id>Q5JWF2-3</id>
        <name>XLas-3</name>
        <sequence type="described" ref="VSP_052173 VSP_052175"/>
    </isoform>
    <isoform>
        <id>P63092-1</id>
        <id>P04895-1</id>
        <name evidence="22">Gnas-1</name>
        <name evidence="22">Alpha-S2</name>
        <name evidence="22">GNASl</name>
        <name evidence="22">Alpha-S-long</name>
        <sequence type="external"/>
    </isoform>
    <isoform>
        <id>P63092-3</id>
        <name>3</name>
        <sequence type="external"/>
    </isoform>
    <isoform>
        <id>P63092-2</id>
        <id>P04895-2</id>
        <name evidence="22">Gnas-2</name>
        <name evidence="22">Alpha-S1</name>
        <name evidence="22">GNASs</name>
        <name evidence="22">Alpha-S-short</name>
        <sequence type="external"/>
    </isoform>
    <isoform>
        <id>O95467-1</id>
        <name evidence="22">Nesp55</name>
        <sequence type="external"/>
    </isoform>
    <isoform>
        <id>P63092-4</id>
        <name>4</name>
        <sequence type="external"/>
    </isoform>
</comment>
<comment type="disease" evidence="12 14">
    <disease id="DI-01678">
        <name>GNAS hyperfunction</name>
        <acronym>GNASHYP</acronym>
        <description>This condition is characterized by increased trauma-related bleeding tendency, prolonged bleeding time, brachydactyly and intellectual disability. Both the XLas isoforms and the ALEX protein are mutated which strongly reduces the interaction between them and this may allow unimpeded activation of the XLas isoforms.</description>
        <dbReference type="MIM" id="139320"/>
    </disease>
    <text>The disease is caused by variants affecting the gene represented in this entry.</text>
</comment>
<comment type="disease" evidence="15">
    <disease id="DI-01167">
        <name>ACTH-independent macronodular adrenal hyperplasia 1</name>
        <acronym>AIMAH1</acronym>
        <description>A rare adrenal defect characterized by multiple, bilateral, non-pigmented, benign, adrenocortical nodules. It results in excessive production of cortisol leading to ACTH-independent Cushing syndrome. Clinical manifestations of Cushing syndrome include facial and truncal obesity, abdominal striae, muscular weakness, osteoporosis, arterial hypertension, diabetes.</description>
        <dbReference type="MIM" id="219080"/>
    </disease>
    <text>The disease is caused by variants affecting the gene represented in this entry.</text>
</comment>
<comment type="disease" evidence="9 10 11 16 17 18 19">
    <disease id="DI-02817">
        <name>Pseudohypoparathyroidism 1B</name>
        <acronym>PHP1B</acronym>
        <description>A disorder characterized by end-organ resistance to parathyroid hormone, hypocalcemia and hyperphosphatemia. Patients affected with PHP1B lack developmental defects characteristic of Albright hereditary osteodystrophy, and typically show no other endocrine abnormalities besides resistance to PTH.</description>
        <dbReference type="MIM" id="603233"/>
    </disease>
    <text>The disease is caused by variants affecting the gene represented in this entry. Most affected individuals have defects in methylation of the gene. In some cases microdeletions involving the STX16 appear to cause loss of methylation at exon A/B of GNAS, resulting in PHP1B. Paternal uniparental isodisomy have also been observed.</text>
</comment>
<comment type="disease" evidence="13">
    <disease id="DI-02818">
        <name>Pseudohypoparathyroidism 1C</name>
        <acronym>PHP1C</acronym>
        <description>A disorder characterized by end-organ resistance to parathyroid hormone, hypocalcemia and hyperphosphatemia. It is commonly associated with Albright hereditary osteodystrophy whose features are short stature, obesity, round facies, short metacarpals and ectopic calcification.</description>
        <dbReference type="MIM" id="612462"/>
    </disease>
    <text>The disease is caused by variants affecting the gene represented in this entry.</text>
</comment>
<comment type="miscellaneous">
    <text evidence="4">This protein is produced by a bicistronic gene which also produces the ALEX protein from an overlapping reading frame.</text>
</comment>
<comment type="miscellaneous">
    <text>The GNAS locus is imprinted in a complex manner, giving rise to distinct paternally, maternally and biallelically expressed proteins. The XLas isoforms are paternally derived, the Gnas isoforms are biallelically derived and the Nesp55 isoforms are maternally derived.</text>
</comment>
<comment type="similarity">
    <text evidence="6">Belongs to the G-alpha family. G(s) subfamily.</text>
</comment>
<comment type="sequence caution" evidence="22">
    <conflict type="frameshift">
        <sequence resource="EMBL-CDS" id="CAB83215"/>
    </conflict>
</comment>
<comment type="online information" name="Atlas of Genetics and Cytogenetics in Oncology and Haematology">
    <link uri="https://atlasgeneticsoncology.org/gene/40727/GNAS"/>
</comment>